<name>LZTL1_BOVIN</name>
<keyword id="KW-0175">Coiled coil</keyword>
<keyword id="KW-0963">Cytoplasm</keyword>
<keyword id="KW-1185">Reference proteome</keyword>
<organism>
    <name type="scientific">Bos taurus</name>
    <name type="common">Bovine</name>
    <dbReference type="NCBI Taxonomy" id="9913"/>
    <lineage>
        <taxon>Eukaryota</taxon>
        <taxon>Metazoa</taxon>
        <taxon>Chordata</taxon>
        <taxon>Craniata</taxon>
        <taxon>Vertebrata</taxon>
        <taxon>Euteleostomi</taxon>
        <taxon>Mammalia</taxon>
        <taxon>Eutheria</taxon>
        <taxon>Laurasiatheria</taxon>
        <taxon>Artiodactyla</taxon>
        <taxon>Ruminantia</taxon>
        <taxon>Pecora</taxon>
        <taxon>Bovidae</taxon>
        <taxon>Bovinae</taxon>
        <taxon>Bos</taxon>
    </lineage>
</organism>
<feature type="chain" id="PRO_0000318758" description="Leucine zipper transcription factor-like protein 1">
    <location>
        <begin position="1"/>
        <end position="299"/>
    </location>
</feature>
<feature type="region of interest" description="Interaction with BSS9" evidence="1">
    <location>
        <begin position="145"/>
        <end position="299"/>
    </location>
</feature>
<feature type="coiled-coil region" evidence="2">
    <location>
        <begin position="96"/>
        <end position="296"/>
    </location>
</feature>
<accession>Q3ZBL4</accession>
<dbReference type="EMBL" id="BT030520">
    <property type="protein sequence ID" value="ABQ12960.1"/>
    <property type="molecule type" value="mRNA"/>
</dbReference>
<dbReference type="EMBL" id="BC103231">
    <property type="protein sequence ID" value="AAI03232.1"/>
    <property type="molecule type" value="mRNA"/>
</dbReference>
<dbReference type="RefSeq" id="NP_001029597.1">
    <property type="nucleotide sequence ID" value="NM_001034425.1"/>
</dbReference>
<dbReference type="SMR" id="Q3ZBL4"/>
<dbReference type="FunCoup" id="Q3ZBL4">
    <property type="interactions" value="1968"/>
</dbReference>
<dbReference type="STRING" id="9913.ENSBTAP00000001942"/>
<dbReference type="PaxDb" id="9913-ENSBTAP00000001942"/>
<dbReference type="PeptideAtlas" id="Q3ZBL4"/>
<dbReference type="Ensembl" id="ENSBTAT00000001942.7">
    <property type="protein sequence ID" value="ENSBTAP00000001942.6"/>
    <property type="gene ID" value="ENSBTAG00000001484.7"/>
</dbReference>
<dbReference type="GeneID" id="512570"/>
<dbReference type="KEGG" id="bta:512570"/>
<dbReference type="CTD" id="54585"/>
<dbReference type="VEuPathDB" id="HostDB:ENSBTAG00000001484"/>
<dbReference type="VGNC" id="VGNC:31119">
    <property type="gene designation" value="LZTFL1"/>
</dbReference>
<dbReference type="eggNOG" id="ENOG502QRGB">
    <property type="taxonomic scope" value="Eukaryota"/>
</dbReference>
<dbReference type="GeneTree" id="ENSGT00390000016415"/>
<dbReference type="HOGENOM" id="CLU_083519_1_0_1"/>
<dbReference type="InParanoid" id="Q3ZBL4"/>
<dbReference type="OMA" id="QMEGTTA"/>
<dbReference type="OrthoDB" id="313412at2759"/>
<dbReference type="Reactome" id="R-BTA-5620922">
    <property type="pathway name" value="BBSome-mediated cargo-targeting to cilium"/>
</dbReference>
<dbReference type="Proteomes" id="UP000009136">
    <property type="component" value="Chromosome 22"/>
</dbReference>
<dbReference type="Bgee" id="ENSBTAG00000001484">
    <property type="expression patterns" value="Expressed in spermatid and 111 other cell types or tissues"/>
</dbReference>
<dbReference type="GO" id="GO:0005929">
    <property type="term" value="C:cilium"/>
    <property type="evidence" value="ECO:0007669"/>
    <property type="project" value="Ensembl"/>
</dbReference>
<dbReference type="GO" id="GO:0005737">
    <property type="term" value="C:cytoplasm"/>
    <property type="evidence" value="ECO:0000318"/>
    <property type="project" value="GO_Central"/>
</dbReference>
<dbReference type="GO" id="GO:0005829">
    <property type="term" value="C:cytosol"/>
    <property type="evidence" value="ECO:0007669"/>
    <property type="project" value="Ensembl"/>
</dbReference>
<dbReference type="GO" id="GO:0002177">
    <property type="term" value="C:manchette"/>
    <property type="evidence" value="ECO:0007669"/>
    <property type="project" value="Ensembl"/>
</dbReference>
<dbReference type="GO" id="GO:0042802">
    <property type="term" value="F:identical protein binding"/>
    <property type="evidence" value="ECO:0007669"/>
    <property type="project" value="Ensembl"/>
</dbReference>
<dbReference type="GO" id="GO:0044877">
    <property type="term" value="F:protein-containing complex binding"/>
    <property type="evidence" value="ECO:0007669"/>
    <property type="project" value="Ensembl"/>
</dbReference>
<dbReference type="GO" id="GO:0030317">
    <property type="term" value="P:flagellated sperm motility"/>
    <property type="evidence" value="ECO:0007669"/>
    <property type="project" value="Ensembl"/>
</dbReference>
<dbReference type="GO" id="GO:1903568">
    <property type="term" value="P:negative regulation of protein localization to ciliary membrane"/>
    <property type="evidence" value="ECO:0007669"/>
    <property type="project" value="Ensembl"/>
</dbReference>
<dbReference type="GO" id="GO:1903565">
    <property type="term" value="P:negative regulation of protein localization to cilium"/>
    <property type="evidence" value="ECO:0000318"/>
    <property type="project" value="GO_Central"/>
</dbReference>
<dbReference type="GO" id="GO:0007283">
    <property type="term" value="P:spermatogenesis"/>
    <property type="evidence" value="ECO:0007669"/>
    <property type="project" value="Ensembl"/>
</dbReference>
<dbReference type="InterPro" id="IPR026157">
    <property type="entry name" value="LZTFL1"/>
</dbReference>
<dbReference type="PANTHER" id="PTHR21635">
    <property type="entry name" value="LEUCINE ZIPPER TRANSCRIPTION FACTOR LIKE"/>
    <property type="match status" value="1"/>
</dbReference>
<dbReference type="PANTHER" id="PTHR21635:SF0">
    <property type="entry name" value="LEUCINE ZIPPER TRANSCRIPTION FACTOR-LIKE PROTEIN 1"/>
    <property type="match status" value="1"/>
</dbReference>
<dbReference type="Pfam" id="PF15294">
    <property type="entry name" value="Leu_zip"/>
    <property type="match status" value="1"/>
</dbReference>
<evidence type="ECO:0000250" key="1"/>
<evidence type="ECO:0000255" key="2"/>
<evidence type="ECO:0000305" key="3"/>
<reference key="1">
    <citation type="journal article" date="2005" name="BMC Genomics">
        <title>Characterization of 954 bovine full-CDS cDNA sequences.</title>
        <authorList>
            <person name="Harhay G.P."/>
            <person name="Sonstegard T.S."/>
            <person name="Keele J.W."/>
            <person name="Heaton M.P."/>
            <person name="Clawson M.L."/>
            <person name="Snelling W.M."/>
            <person name="Wiedmann R.T."/>
            <person name="Van Tassell C.P."/>
            <person name="Smith T.P.L."/>
        </authorList>
    </citation>
    <scope>NUCLEOTIDE SEQUENCE [LARGE SCALE MRNA]</scope>
</reference>
<reference key="2">
    <citation type="submission" date="2005-08" db="EMBL/GenBank/DDBJ databases">
        <authorList>
            <consortium name="NIH - Mammalian Gene Collection (MGC) project"/>
        </authorList>
    </citation>
    <scope>NUCLEOTIDE SEQUENCE [LARGE SCALE MRNA]</scope>
    <source>
        <strain>Hereford</strain>
        <tissue>Heart ventricle</tissue>
    </source>
</reference>
<gene>
    <name type="primary">LZTFL1</name>
</gene>
<comment type="function">
    <text evidence="1">Regulates ciliary localization of the BBSome complex. Together with the BBSome complex, controls SMO ciliary trafficking and contributes to the sonic hedgehog (SHH) pathway regulation. May play a role in neurite outgrowth. May have tumor suppressor function (By similarity).</text>
</comment>
<comment type="subunit">
    <text evidence="1">Self-associates. Interacts with BBS9; the interaction mediates the association of LZTL1 with the BBsome complex and regulates BBSome ciliary trafficking (By similarity).</text>
</comment>
<comment type="subcellular location">
    <subcellularLocation>
        <location evidence="1">Cytoplasm</location>
    </subcellularLocation>
</comment>
<comment type="similarity">
    <text evidence="3">Belongs to the LZTFL1 family.</text>
</comment>
<sequence>MAELGLNEHHQNEVINYMRFARSKRGLRLKTVDSCFQDLKESRLVEETFTVDEVSEVLNGLQAVVHSEVESELINTAYTNVLLLRQLFSQAEKWYLKLQTDISELENRELLEQVAEFEKAEFTSSNKKSIIDSMKPKLAPLHEGGAAELLNKEIIRLQEENEKLKSRLKTIESQATDALDEKSKLERALQDLQLEHGSQKDFIKAQDLSDLENTVAALKSEFQKTLNDQTENQKSLEENLATAKHDLLRVQEQLSMAEKELEKKFQQTAAFRNMKEILTKKNDQIKDLRKRLAKYEPED</sequence>
<proteinExistence type="evidence at transcript level"/>
<protein>
    <recommendedName>
        <fullName>Leucine zipper transcription factor-like protein 1</fullName>
    </recommendedName>
</protein>